<gene>
    <name type="primary">aspS2</name>
    <name type="ordered locus">DR_1055</name>
</gene>
<feature type="chain" id="PRO_0000429272" description="Aspartate--tRNA(Asp/Asn) ligase">
    <location>
        <begin position="1"/>
        <end position="435"/>
    </location>
</feature>
<feature type="region of interest" description="Aspartate" evidence="1">
    <location>
        <begin position="185"/>
        <end position="188"/>
    </location>
</feature>
<feature type="binding site" evidence="1">
    <location>
        <position position="163"/>
    </location>
    <ligand>
        <name>L-aspartate</name>
        <dbReference type="ChEBI" id="CHEBI:29991"/>
    </ligand>
</feature>
<feature type="binding site" evidence="1">
    <location>
        <begin position="206"/>
        <end position="208"/>
    </location>
    <ligand>
        <name>ATP</name>
        <dbReference type="ChEBI" id="CHEBI:30616"/>
    </ligand>
</feature>
<feature type="binding site" evidence="1">
    <location>
        <position position="206"/>
    </location>
    <ligand>
        <name>L-aspartate</name>
        <dbReference type="ChEBI" id="CHEBI:29991"/>
    </ligand>
</feature>
<feature type="binding site" evidence="1">
    <location>
        <begin position="214"/>
        <end position="216"/>
    </location>
    <ligand>
        <name>ATP</name>
        <dbReference type="ChEBI" id="CHEBI:30616"/>
    </ligand>
</feature>
<feature type="binding site" evidence="1">
    <location>
        <position position="358"/>
    </location>
    <ligand>
        <name>ATP</name>
        <dbReference type="ChEBI" id="CHEBI:30616"/>
    </ligand>
</feature>
<feature type="binding site" evidence="1">
    <location>
        <position position="361"/>
    </location>
    <ligand>
        <name>L-aspartate</name>
        <dbReference type="ChEBI" id="CHEBI:29991"/>
    </ligand>
</feature>
<feature type="binding site" evidence="1">
    <location>
        <position position="365"/>
    </location>
    <ligand>
        <name>L-aspartate</name>
        <dbReference type="ChEBI" id="CHEBI:29991"/>
    </ligand>
</feature>
<feature type="binding site" evidence="1">
    <location>
        <begin position="406"/>
        <end position="409"/>
    </location>
    <ligand>
        <name>ATP</name>
        <dbReference type="ChEBI" id="CHEBI:30616"/>
    </ligand>
</feature>
<feature type="site" description="Important for tRNA non-discrimination" evidence="1">
    <location>
        <position position="77"/>
    </location>
</feature>
<feature type="mutagenesis site" description="Enhances enzyme specificity for tRNA(Asp) over tRNA(Asn)." evidence="2">
    <original>H</original>
    <variation>Q</variation>
    <location>
        <position position="28"/>
    </location>
</feature>
<feature type="mutagenesis site" description="Seems not to be able to charge tRNA(Asn) in vivo, but Asp-tRNA(Asp) formation is not affected." evidence="2">
    <original>P</original>
    <variation>C</variation>
    <variation>I</variation>
    <variation>L</variation>
    <variation>F</variation>
    <variation>S</variation>
    <variation>V</variation>
    <location>
        <position position="77"/>
    </location>
</feature>
<feature type="mutagenesis site" description="Enhances enzyme specificity for tRNA(Asp) over tRNA(Asn), by decreasing the ability to form Asp-tRNA(Asn) and increasing the efficiency of Asp-tRNA(Asp) synthesis in vitro. Seems not to be able to charge tRNA(Asn) in vivo." evidence="2">
    <original>P</original>
    <variation>K</variation>
    <location>
        <position position="77"/>
    </location>
</feature>
<name>SYDND_DEIRA</name>
<sequence>MTSPLKRTLTRELPQHEGQTVKLQGFVHARRDLGGVQFLVLRDVTGVTQCVGSGLTLPLAESSVEVVGKVKAHPKAPGGFEVQVEDFRVISAATEATPVEIPKMEWNVNPETMLDYRVVTVRGLKERAALKVQAELVDAFRAHLRGEGFTEISTPKIVSAGAEGGANLFPIDYFGHPAYLAQSPQLYKQIMVGVFERVFEVAAVYRAEEHATSRHLNEYLSLDVEMGFIEDEEDVMGLENRLLASIMERLRATSQAEFELLGATIPDVPAHIPRITLMDARQLVTEKYGHPVGGKDLDPEAERLLSQHFAETEGSDFVFVTKYPRAARPFYAHPELNEDGSVNGEVTRGFDLLFRGIEITSGGQRIHDYGMLMDSIAAYKLKPESLEGYTEVFKYGMPPHGGFAIGAERLTAKLLGIANVRYARAFPRDRHRLTP</sequence>
<organism>
    <name type="scientific">Deinococcus radiodurans (strain ATCC 13939 / DSM 20539 / JCM 16871 / CCUG 27074 / LMG 4051 / NBRC 15346 / NCIMB 9279 / VKM B-1422 / R1)</name>
    <dbReference type="NCBI Taxonomy" id="243230"/>
    <lineage>
        <taxon>Bacteria</taxon>
        <taxon>Thermotogati</taxon>
        <taxon>Deinococcota</taxon>
        <taxon>Deinococci</taxon>
        <taxon>Deinococcales</taxon>
        <taxon>Deinococcaceae</taxon>
        <taxon>Deinococcus</taxon>
    </lineage>
</organism>
<reference key="1">
    <citation type="journal article" date="1999" name="Science">
        <title>Genome sequence of the radioresistant bacterium Deinococcus radiodurans R1.</title>
        <authorList>
            <person name="White O."/>
            <person name="Eisen J.A."/>
            <person name="Heidelberg J.F."/>
            <person name="Hickey E.K."/>
            <person name="Peterson J.D."/>
            <person name="Dodson R.J."/>
            <person name="Haft D.H."/>
            <person name="Gwinn M.L."/>
            <person name="Nelson W.C."/>
            <person name="Richardson D.L."/>
            <person name="Moffat K.S."/>
            <person name="Qin H."/>
            <person name="Jiang L."/>
            <person name="Pamphile W."/>
            <person name="Crosby M."/>
            <person name="Shen M."/>
            <person name="Vamathevan J.J."/>
            <person name="Lam P."/>
            <person name="McDonald L.A."/>
            <person name="Utterback T.R."/>
            <person name="Zalewski C."/>
            <person name="Makarova K.S."/>
            <person name="Aravind L."/>
            <person name="Daly M.J."/>
            <person name="Minton K.W."/>
            <person name="Fleischmann R.D."/>
            <person name="Ketchum K.A."/>
            <person name="Nelson K.E."/>
            <person name="Salzberg S.L."/>
            <person name="Smith H.O."/>
            <person name="Venter J.C."/>
            <person name="Fraser C.M."/>
        </authorList>
    </citation>
    <scope>NUCLEOTIDE SEQUENCE [LARGE SCALE GENOMIC DNA]</scope>
    <source>
        <strain>ATCC 13939 / DSM 20539 / JCM 16871 / CCUG 27074 / LMG 4051 / NBRC 15346 / NCIMB 9279 / VKM B-1422 / R1</strain>
    </source>
</reference>
<reference key="2">
    <citation type="journal article" date="1998" name="Proc. Natl. Acad. Sci. U.S.A.">
        <title>Glutamyl-tRNA(Gln) amidotransferase in Deinococcus radiodurans may be confined to asparagine biosynthesis.</title>
        <authorList>
            <person name="Curnow A.W."/>
            <person name="Tumbula D.L."/>
            <person name="Pelaschier J.T."/>
            <person name="Min B."/>
            <person name="Soll D."/>
        </authorList>
    </citation>
    <scope>FUNCTION AS A NON-DISCRIMINATING ASPRS</scope>
    <scope>GENE NAME</scope>
</reference>
<reference key="3">
    <citation type="journal article" date="2005" name="J. Biol. Chem.">
        <title>Aspartyl-tRNA synthetase requires a conserved proline in the anticodon-binding loop for tRNA(Asn) recognition in vivo.</title>
        <authorList>
            <person name="Feng L."/>
            <person name="Yuan J."/>
            <person name="Toogood H."/>
            <person name="Tumbula-Hansen D."/>
            <person name="Soll D."/>
        </authorList>
    </citation>
    <scope>FUNCTION AS A NON-DISCRIMINATING ASPRS</scope>
    <scope>CATALYTIC ACTIVITY</scope>
    <scope>SUBSTRATE SPECIFICITY</scope>
    <scope>KINETIC PARAMETERS</scope>
    <scope>MUTAGENESIS OF HIS-28 AND PRO-77</scope>
    <scope>DISCRIMINATION SITE</scope>
</reference>
<accession>Q9RVH4</accession>
<keyword id="KW-0030">Aminoacyl-tRNA synthetase</keyword>
<keyword id="KW-0067">ATP-binding</keyword>
<keyword id="KW-0963">Cytoplasm</keyword>
<keyword id="KW-0436">Ligase</keyword>
<keyword id="KW-0547">Nucleotide-binding</keyword>
<keyword id="KW-0648">Protein biosynthesis</keyword>
<keyword id="KW-1185">Reference proteome</keyword>
<protein>
    <recommendedName>
        <fullName evidence="1">Aspartate--tRNA(Asp/Asn) ligase</fullName>
        <ecNumber evidence="1">6.1.1.23</ecNumber>
    </recommendedName>
    <alternativeName>
        <fullName>Aspartyl-tRNA synthetase 2</fullName>
        <shortName>AspRS2</shortName>
    </alternativeName>
    <alternativeName>
        <fullName evidence="1">Non-discriminating aspartyl-tRNA synthetase</fullName>
        <shortName evidence="1">ND-AspRS</shortName>
    </alternativeName>
</protein>
<comment type="function">
    <text evidence="2 3">Aspartyl-tRNA synthetase with relaxed tRNA specificity since it is able to aspartylate not only its cognate tRNA(Asp) but also tRNA(Asn). Reaction proceeds in two steps: L-aspartate is first activated by ATP to form Asp-AMP and then transferred to the acceptor end of tRNA(Asp/Asn). Is slightly more efficient at aminoacylating tRNA(Asn) over tRNA(Asp).</text>
</comment>
<comment type="catalytic activity">
    <reaction evidence="1 2">
        <text>tRNA(Asx) + L-aspartate + ATP = L-aspartyl-tRNA(Asx) + AMP + diphosphate</text>
        <dbReference type="Rhea" id="RHEA:18349"/>
        <dbReference type="Rhea" id="RHEA-COMP:9710"/>
        <dbReference type="Rhea" id="RHEA-COMP:9711"/>
        <dbReference type="ChEBI" id="CHEBI:29991"/>
        <dbReference type="ChEBI" id="CHEBI:30616"/>
        <dbReference type="ChEBI" id="CHEBI:33019"/>
        <dbReference type="ChEBI" id="CHEBI:78442"/>
        <dbReference type="ChEBI" id="CHEBI:78516"/>
        <dbReference type="ChEBI" id="CHEBI:456215"/>
        <dbReference type="EC" id="6.1.1.23"/>
    </reaction>
</comment>
<comment type="biophysicochemical properties">
    <kinetics>
        <KM evidence="2">0.8 uM for tRNA(Asp)</KM>
        <KM evidence="2">2 uM for tRNA(Asn)</KM>
        <text>kcat is 0.15 sec(-1) for tRNA(Asp) aspartylation and 0.51 sec(-1) for tRNA(Asn) aspartylation.</text>
    </kinetics>
</comment>
<comment type="subunit">
    <text evidence="1">Homodimer.</text>
</comment>
<comment type="subcellular location">
    <subcellularLocation>
        <location evidence="1">Cytoplasm</location>
    </subcellularLocation>
</comment>
<comment type="similarity">
    <text evidence="1">Belongs to the class-II aminoacyl-tRNA synthetase family. Type 2 subfamily.</text>
</comment>
<proteinExistence type="evidence at protein level"/>
<dbReference type="EC" id="6.1.1.23" evidence="1"/>
<dbReference type="EMBL" id="AE000513">
    <property type="protein sequence ID" value="AAF10623.1"/>
    <property type="molecule type" value="Genomic_DNA"/>
</dbReference>
<dbReference type="PIR" id="H75443">
    <property type="entry name" value="H75443"/>
</dbReference>
<dbReference type="RefSeq" id="NP_294779.1">
    <property type="nucleotide sequence ID" value="NC_001263.1"/>
</dbReference>
<dbReference type="RefSeq" id="WP_010887698.1">
    <property type="nucleotide sequence ID" value="NC_001263.1"/>
</dbReference>
<dbReference type="SMR" id="Q9RVH4"/>
<dbReference type="FunCoup" id="Q9RVH4">
    <property type="interactions" value="390"/>
</dbReference>
<dbReference type="STRING" id="243230.DR_1055"/>
<dbReference type="PaxDb" id="243230-DR_1055"/>
<dbReference type="EnsemblBacteria" id="AAF10623">
    <property type="protein sequence ID" value="AAF10623"/>
    <property type="gene ID" value="DR_1055"/>
</dbReference>
<dbReference type="GeneID" id="69517299"/>
<dbReference type="KEGG" id="dra:DR_1055"/>
<dbReference type="PATRIC" id="fig|243230.17.peg.1250"/>
<dbReference type="eggNOG" id="COG0017">
    <property type="taxonomic scope" value="Bacteria"/>
</dbReference>
<dbReference type="HOGENOM" id="CLU_004553_2_1_0"/>
<dbReference type="InParanoid" id="Q9RVH4"/>
<dbReference type="OrthoDB" id="9802326at2"/>
<dbReference type="BioCyc" id="MetaCyc:MONOMER-14054"/>
<dbReference type="Proteomes" id="UP000002524">
    <property type="component" value="Chromosome 1"/>
</dbReference>
<dbReference type="GO" id="GO:0017101">
    <property type="term" value="C:aminoacyl-tRNA synthetase multienzyme complex"/>
    <property type="evidence" value="ECO:0000318"/>
    <property type="project" value="GO_Central"/>
</dbReference>
<dbReference type="GO" id="GO:0005829">
    <property type="term" value="C:cytosol"/>
    <property type="evidence" value="ECO:0000318"/>
    <property type="project" value="GO_Central"/>
</dbReference>
<dbReference type="GO" id="GO:0004815">
    <property type="term" value="F:aspartate-tRNA ligase activity"/>
    <property type="evidence" value="ECO:0000318"/>
    <property type="project" value="GO_Central"/>
</dbReference>
<dbReference type="GO" id="GO:0050560">
    <property type="term" value="F:aspartate-tRNA(Asn) ligase activity"/>
    <property type="evidence" value="ECO:0007669"/>
    <property type="project" value="UniProtKB-EC"/>
</dbReference>
<dbReference type="GO" id="GO:0005524">
    <property type="term" value="F:ATP binding"/>
    <property type="evidence" value="ECO:0007669"/>
    <property type="project" value="UniProtKB-UniRule"/>
</dbReference>
<dbReference type="GO" id="GO:0003723">
    <property type="term" value="F:RNA binding"/>
    <property type="evidence" value="ECO:0000318"/>
    <property type="project" value="GO_Central"/>
</dbReference>
<dbReference type="GO" id="GO:0006422">
    <property type="term" value="P:aspartyl-tRNA aminoacylation"/>
    <property type="evidence" value="ECO:0000318"/>
    <property type="project" value="GO_Central"/>
</dbReference>
<dbReference type="CDD" id="cd04100">
    <property type="entry name" value="Asp_Lys_Asn_RS_N"/>
    <property type="match status" value="1"/>
</dbReference>
<dbReference type="CDD" id="cd00776">
    <property type="entry name" value="AsxRS_core"/>
    <property type="match status" value="1"/>
</dbReference>
<dbReference type="FunFam" id="3.30.930.10:FF:000214">
    <property type="entry name" value="Aspartate--tRNA(Asp/Asn) ligase"/>
    <property type="match status" value="1"/>
</dbReference>
<dbReference type="Gene3D" id="3.30.930.10">
    <property type="entry name" value="Bira Bifunctional Protein, Domain 2"/>
    <property type="match status" value="1"/>
</dbReference>
<dbReference type="Gene3D" id="2.40.50.140">
    <property type="entry name" value="Nucleic acid-binding proteins"/>
    <property type="match status" value="1"/>
</dbReference>
<dbReference type="HAMAP" id="MF_02075">
    <property type="entry name" value="Asp_tRNA_synth_type2"/>
    <property type="match status" value="1"/>
</dbReference>
<dbReference type="InterPro" id="IPR004364">
    <property type="entry name" value="Aa-tRNA-synt_II"/>
</dbReference>
<dbReference type="InterPro" id="IPR006195">
    <property type="entry name" value="aa-tRNA-synth_II"/>
</dbReference>
<dbReference type="InterPro" id="IPR045864">
    <property type="entry name" value="aa-tRNA-synth_II/BPL/LPL"/>
</dbReference>
<dbReference type="InterPro" id="IPR004523">
    <property type="entry name" value="Asp-tRNA_synthase_2"/>
</dbReference>
<dbReference type="InterPro" id="IPR002312">
    <property type="entry name" value="Asp/Asn-tRNA-synth_IIb"/>
</dbReference>
<dbReference type="InterPro" id="IPR012340">
    <property type="entry name" value="NA-bd_OB-fold"/>
</dbReference>
<dbReference type="InterPro" id="IPR004365">
    <property type="entry name" value="NA-bd_OB_tRNA"/>
</dbReference>
<dbReference type="NCBIfam" id="TIGR00458">
    <property type="entry name" value="aspS_nondisc"/>
    <property type="match status" value="1"/>
</dbReference>
<dbReference type="NCBIfam" id="NF003483">
    <property type="entry name" value="PRK05159.1"/>
    <property type="match status" value="1"/>
</dbReference>
<dbReference type="PANTHER" id="PTHR43450:SF1">
    <property type="entry name" value="ASPARTATE--TRNA LIGASE, CYTOPLASMIC"/>
    <property type="match status" value="1"/>
</dbReference>
<dbReference type="PANTHER" id="PTHR43450">
    <property type="entry name" value="ASPARTYL-TRNA SYNTHETASE"/>
    <property type="match status" value="1"/>
</dbReference>
<dbReference type="Pfam" id="PF00152">
    <property type="entry name" value="tRNA-synt_2"/>
    <property type="match status" value="1"/>
</dbReference>
<dbReference type="Pfam" id="PF01336">
    <property type="entry name" value="tRNA_anti-codon"/>
    <property type="match status" value="1"/>
</dbReference>
<dbReference type="PRINTS" id="PR01042">
    <property type="entry name" value="TRNASYNTHASP"/>
</dbReference>
<dbReference type="SUPFAM" id="SSF55681">
    <property type="entry name" value="Class II aaRS and biotin synthetases"/>
    <property type="match status" value="1"/>
</dbReference>
<dbReference type="SUPFAM" id="SSF50249">
    <property type="entry name" value="Nucleic acid-binding proteins"/>
    <property type="match status" value="1"/>
</dbReference>
<dbReference type="PROSITE" id="PS50862">
    <property type="entry name" value="AA_TRNA_LIGASE_II"/>
    <property type="match status" value="1"/>
</dbReference>
<evidence type="ECO:0000255" key="1">
    <source>
        <dbReference type="HAMAP-Rule" id="MF_02075"/>
    </source>
</evidence>
<evidence type="ECO:0000269" key="2">
    <source>
    </source>
</evidence>
<evidence type="ECO:0000269" key="3">
    <source>
    </source>
</evidence>